<accession>Q5HSJ8</accession>
<keyword id="KW-0687">Ribonucleoprotein</keyword>
<keyword id="KW-0689">Ribosomal protein</keyword>
<keyword id="KW-0694">RNA-binding</keyword>
<keyword id="KW-0699">rRNA-binding</keyword>
<sequence>MAKRKIVKKKVVKKNIAKGIVYISATFNNTMVTVTDEMGNAIAWSSAGGLGFKGSKKSTPYAAQQAVEDALNKAKEHGIKEVGIKVQGPGSGRETAVKSVGAMEGIKVTFLKDITPLAHNGCRPPKRRRV</sequence>
<gene>
    <name evidence="1" type="primary">rpsK</name>
    <name type="ordered locus">CJE1765</name>
</gene>
<proteinExistence type="inferred from homology"/>
<feature type="chain" id="PRO_0000230392" description="Small ribosomal subunit protein uS11">
    <location>
        <begin position="1"/>
        <end position="130"/>
    </location>
</feature>
<name>RS11_CAMJR</name>
<dbReference type="EMBL" id="CP000025">
    <property type="protein sequence ID" value="AAW36189.1"/>
    <property type="molecule type" value="Genomic_DNA"/>
</dbReference>
<dbReference type="RefSeq" id="WP_002779544.1">
    <property type="nucleotide sequence ID" value="NC_003912.7"/>
</dbReference>
<dbReference type="SMR" id="Q5HSJ8"/>
<dbReference type="GeneID" id="98394728"/>
<dbReference type="KEGG" id="cjr:CJE1765"/>
<dbReference type="HOGENOM" id="CLU_072439_5_0_7"/>
<dbReference type="GO" id="GO:1990904">
    <property type="term" value="C:ribonucleoprotein complex"/>
    <property type="evidence" value="ECO:0007669"/>
    <property type="project" value="UniProtKB-KW"/>
</dbReference>
<dbReference type="GO" id="GO:0005840">
    <property type="term" value="C:ribosome"/>
    <property type="evidence" value="ECO:0007669"/>
    <property type="project" value="UniProtKB-KW"/>
</dbReference>
<dbReference type="GO" id="GO:0019843">
    <property type="term" value="F:rRNA binding"/>
    <property type="evidence" value="ECO:0007669"/>
    <property type="project" value="UniProtKB-UniRule"/>
</dbReference>
<dbReference type="GO" id="GO:0003735">
    <property type="term" value="F:structural constituent of ribosome"/>
    <property type="evidence" value="ECO:0007669"/>
    <property type="project" value="InterPro"/>
</dbReference>
<dbReference type="GO" id="GO:0006412">
    <property type="term" value="P:translation"/>
    <property type="evidence" value="ECO:0007669"/>
    <property type="project" value="UniProtKB-UniRule"/>
</dbReference>
<dbReference type="FunFam" id="3.30.420.80:FF:000001">
    <property type="entry name" value="30S ribosomal protein S11"/>
    <property type="match status" value="1"/>
</dbReference>
<dbReference type="Gene3D" id="3.30.420.80">
    <property type="entry name" value="Ribosomal protein S11"/>
    <property type="match status" value="1"/>
</dbReference>
<dbReference type="HAMAP" id="MF_01310">
    <property type="entry name" value="Ribosomal_uS11"/>
    <property type="match status" value="1"/>
</dbReference>
<dbReference type="InterPro" id="IPR001971">
    <property type="entry name" value="Ribosomal_uS11"/>
</dbReference>
<dbReference type="InterPro" id="IPR019981">
    <property type="entry name" value="Ribosomal_uS11_bac-type"/>
</dbReference>
<dbReference type="InterPro" id="IPR018102">
    <property type="entry name" value="Ribosomal_uS11_CS"/>
</dbReference>
<dbReference type="InterPro" id="IPR036967">
    <property type="entry name" value="Ribosomal_uS11_sf"/>
</dbReference>
<dbReference type="NCBIfam" id="NF003698">
    <property type="entry name" value="PRK05309.1"/>
    <property type="match status" value="1"/>
</dbReference>
<dbReference type="NCBIfam" id="TIGR03632">
    <property type="entry name" value="uS11_bact"/>
    <property type="match status" value="1"/>
</dbReference>
<dbReference type="PANTHER" id="PTHR11759">
    <property type="entry name" value="40S RIBOSOMAL PROTEIN S14/30S RIBOSOMAL PROTEIN S11"/>
    <property type="match status" value="1"/>
</dbReference>
<dbReference type="Pfam" id="PF00411">
    <property type="entry name" value="Ribosomal_S11"/>
    <property type="match status" value="1"/>
</dbReference>
<dbReference type="PIRSF" id="PIRSF002131">
    <property type="entry name" value="Ribosomal_S11"/>
    <property type="match status" value="1"/>
</dbReference>
<dbReference type="SUPFAM" id="SSF53137">
    <property type="entry name" value="Translational machinery components"/>
    <property type="match status" value="1"/>
</dbReference>
<dbReference type="PROSITE" id="PS00054">
    <property type="entry name" value="RIBOSOMAL_S11"/>
    <property type="match status" value="1"/>
</dbReference>
<organism>
    <name type="scientific">Campylobacter jejuni (strain RM1221)</name>
    <dbReference type="NCBI Taxonomy" id="195099"/>
    <lineage>
        <taxon>Bacteria</taxon>
        <taxon>Pseudomonadati</taxon>
        <taxon>Campylobacterota</taxon>
        <taxon>Epsilonproteobacteria</taxon>
        <taxon>Campylobacterales</taxon>
        <taxon>Campylobacteraceae</taxon>
        <taxon>Campylobacter</taxon>
    </lineage>
</organism>
<evidence type="ECO:0000255" key="1">
    <source>
        <dbReference type="HAMAP-Rule" id="MF_01310"/>
    </source>
</evidence>
<evidence type="ECO:0000305" key="2"/>
<protein>
    <recommendedName>
        <fullName evidence="1">Small ribosomal subunit protein uS11</fullName>
    </recommendedName>
    <alternativeName>
        <fullName evidence="2">30S ribosomal protein S11</fullName>
    </alternativeName>
</protein>
<comment type="function">
    <text evidence="1">Located on the platform of the 30S subunit, it bridges several disparate RNA helices of the 16S rRNA. Forms part of the Shine-Dalgarno cleft in the 70S ribosome.</text>
</comment>
<comment type="subunit">
    <text evidence="1">Part of the 30S ribosomal subunit. Interacts with proteins S7 and S18. Binds to IF-3.</text>
</comment>
<comment type="similarity">
    <text evidence="1">Belongs to the universal ribosomal protein uS11 family.</text>
</comment>
<reference key="1">
    <citation type="journal article" date="2005" name="PLoS Biol.">
        <title>Major structural differences and novel potential virulence mechanisms from the genomes of multiple Campylobacter species.</title>
        <authorList>
            <person name="Fouts D.E."/>
            <person name="Mongodin E.F."/>
            <person name="Mandrell R.E."/>
            <person name="Miller W.G."/>
            <person name="Rasko D.A."/>
            <person name="Ravel J."/>
            <person name="Brinkac L.M."/>
            <person name="DeBoy R.T."/>
            <person name="Parker C.T."/>
            <person name="Daugherty S.C."/>
            <person name="Dodson R.J."/>
            <person name="Durkin A.S."/>
            <person name="Madupu R."/>
            <person name="Sullivan S.A."/>
            <person name="Shetty J.U."/>
            <person name="Ayodeji M.A."/>
            <person name="Shvartsbeyn A."/>
            <person name="Schatz M.C."/>
            <person name="Badger J.H."/>
            <person name="Fraser C.M."/>
            <person name="Nelson K.E."/>
        </authorList>
    </citation>
    <scope>NUCLEOTIDE SEQUENCE [LARGE SCALE GENOMIC DNA]</scope>
    <source>
        <strain>RM1221</strain>
    </source>
</reference>